<organism>
    <name type="scientific">Mycobacterium bovis (strain ATCC BAA-935 / AF2122/97)</name>
    <dbReference type="NCBI Taxonomy" id="233413"/>
    <lineage>
        <taxon>Bacteria</taxon>
        <taxon>Bacillati</taxon>
        <taxon>Actinomycetota</taxon>
        <taxon>Actinomycetes</taxon>
        <taxon>Mycobacteriales</taxon>
        <taxon>Mycobacteriaceae</taxon>
        <taxon>Mycobacterium</taxon>
        <taxon>Mycobacterium tuberculosis complex</taxon>
    </lineage>
</organism>
<evidence type="ECO:0000255" key="1"/>
<evidence type="ECO:0000305" key="2"/>
<dbReference type="EMBL" id="LT708304">
    <property type="protein sequence ID" value="SIU00629.1"/>
    <property type="molecule type" value="Genomic_DNA"/>
</dbReference>
<dbReference type="RefSeq" id="NP_855672.1">
    <property type="nucleotide sequence ID" value="NC_002945.3"/>
</dbReference>
<dbReference type="RefSeq" id="WP_003410039.1">
    <property type="nucleotide sequence ID" value="NC_002945.4"/>
</dbReference>
<dbReference type="SMR" id="P63350"/>
<dbReference type="KEGG" id="mbo:BQ2027_MB2022C"/>
<dbReference type="PATRIC" id="fig|233413.5.peg.2221"/>
<dbReference type="Proteomes" id="UP000001419">
    <property type="component" value="Chromosome"/>
</dbReference>
<dbReference type="GO" id="GO:0005886">
    <property type="term" value="C:plasma membrane"/>
    <property type="evidence" value="ECO:0007669"/>
    <property type="project" value="UniProtKB-SubCell"/>
</dbReference>
<dbReference type="GO" id="GO:0022857">
    <property type="term" value="F:transmembrane transporter activity"/>
    <property type="evidence" value="ECO:0007669"/>
    <property type="project" value="InterPro"/>
</dbReference>
<dbReference type="Gene3D" id="1.20.1740.10">
    <property type="entry name" value="Amino acid/polyamine transporter I"/>
    <property type="match status" value="1"/>
</dbReference>
<dbReference type="InterPro" id="IPR002293">
    <property type="entry name" value="AA/rel_permease1"/>
</dbReference>
<dbReference type="InterPro" id="IPR050367">
    <property type="entry name" value="APC_superfamily"/>
</dbReference>
<dbReference type="PANTHER" id="PTHR42770">
    <property type="entry name" value="AMINO ACID TRANSPORTER-RELATED"/>
    <property type="match status" value="1"/>
</dbReference>
<dbReference type="PANTHER" id="PTHR42770:SF7">
    <property type="entry name" value="MEMBRANE PROTEIN"/>
    <property type="match status" value="1"/>
</dbReference>
<dbReference type="Pfam" id="PF13520">
    <property type="entry name" value="AA_permease_2"/>
    <property type="match status" value="1"/>
</dbReference>
<dbReference type="PIRSF" id="PIRSF006060">
    <property type="entry name" value="AA_transporter"/>
    <property type="match status" value="1"/>
</dbReference>
<proteinExistence type="inferred from homology"/>
<gene>
    <name type="ordered locus">BQ2027_MB2022C</name>
</gene>
<reference key="1">
    <citation type="journal article" date="2003" name="Proc. Natl. Acad. Sci. U.S.A.">
        <title>The complete genome sequence of Mycobacterium bovis.</title>
        <authorList>
            <person name="Garnier T."/>
            <person name="Eiglmeier K."/>
            <person name="Camus J.-C."/>
            <person name="Medina N."/>
            <person name="Mansoor H."/>
            <person name="Pryor M."/>
            <person name="Duthoy S."/>
            <person name="Grondin S."/>
            <person name="Lacroix C."/>
            <person name="Monsempe C."/>
            <person name="Simon S."/>
            <person name="Harris B."/>
            <person name="Atkin R."/>
            <person name="Doggett J."/>
            <person name="Mayes R."/>
            <person name="Keating L."/>
            <person name="Wheeler P.R."/>
            <person name="Parkhill J."/>
            <person name="Barrell B.G."/>
            <person name="Cole S.T."/>
            <person name="Gordon S.V."/>
            <person name="Hewinson R.G."/>
        </authorList>
    </citation>
    <scope>NUCLEOTIDE SEQUENCE [LARGE SCALE GENOMIC DNA]</scope>
    <source>
        <strain>ATCC BAA-935 / AF2122/97</strain>
    </source>
</reference>
<reference key="2">
    <citation type="journal article" date="2017" name="Genome Announc.">
        <title>Updated reference genome sequence and annotation of Mycobacterium bovis AF2122/97.</title>
        <authorList>
            <person name="Malone K.M."/>
            <person name="Farrell D."/>
            <person name="Stuber T.P."/>
            <person name="Schubert O.T."/>
            <person name="Aebersold R."/>
            <person name="Robbe-Austerman S."/>
            <person name="Gordon S.V."/>
        </authorList>
    </citation>
    <scope>NUCLEOTIDE SEQUENCE [LARGE SCALE GENOMIC DNA]</scope>
    <scope>GENOME REANNOTATION</scope>
    <source>
        <strain>ATCC BAA-935 / AF2122/97</strain>
    </source>
</reference>
<comment type="function">
    <text>Probable amino-acid or metabolite transport protein.</text>
</comment>
<comment type="subcellular location">
    <subcellularLocation>
        <location evidence="2">Cell membrane</location>
        <topology evidence="2">Multi-pass membrane protein</topology>
    </subcellularLocation>
</comment>
<comment type="similarity">
    <text evidence="2">Belongs to the amino acid-polyamine-organocation (APC) superfamily.</text>
</comment>
<accession>P63350</accession>
<accession>A0A1R3Y010</accession>
<accession>Q10858</accession>
<accession>X2BJI4</accession>
<name>Y2022_MYCBO</name>
<feature type="chain" id="PRO_0000054226" description="Uncharacterized transporter Mb2022c">
    <location>
        <begin position="1"/>
        <end position="440"/>
    </location>
</feature>
<feature type="transmembrane region" description="Helical" evidence="1">
    <location>
        <begin position="24"/>
        <end position="44"/>
    </location>
</feature>
<feature type="transmembrane region" description="Helical" evidence="1">
    <location>
        <begin position="47"/>
        <end position="67"/>
    </location>
</feature>
<feature type="transmembrane region" description="Helical" evidence="1">
    <location>
        <begin position="93"/>
        <end position="113"/>
    </location>
</feature>
<feature type="transmembrane region" description="Helical" evidence="1">
    <location>
        <begin position="117"/>
        <end position="137"/>
    </location>
</feature>
<feature type="transmembrane region" description="Helical" evidence="1">
    <location>
        <begin position="155"/>
        <end position="175"/>
    </location>
</feature>
<feature type="transmembrane region" description="Helical" evidence="1">
    <location>
        <begin position="183"/>
        <end position="203"/>
    </location>
</feature>
<feature type="transmembrane region" description="Helical" evidence="1">
    <location>
        <begin position="229"/>
        <end position="249"/>
    </location>
</feature>
<feature type="transmembrane region" description="Helical" evidence="1">
    <location>
        <begin position="276"/>
        <end position="296"/>
    </location>
</feature>
<feature type="transmembrane region" description="Helical" evidence="1">
    <location>
        <begin position="323"/>
        <end position="343"/>
    </location>
</feature>
<feature type="transmembrane region" description="Helical" evidence="1">
    <location>
        <begin position="346"/>
        <end position="366"/>
    </location>
</feature>
<feature type="transmembrane region" description="Helical" evidence="1">
    <location>
        <begin position="379"/>
        <end position="399"/>
    </location>
</feature>
<feature type="transmembrane region" description="Helical" evidence="1">
    <location>
        <begin position="400"/>
        <end position="420"/>
    </location>
</feature>
<keyword id="KW-1003">Cell membrane</keyword>
<keyword id="KW-0472">Membrane</keyword>
<keyword id="KW-1185">Reference proteome</keyword>
<keyword id="KW-0812">Transmembrane</keyword>
<keyword id="KW-1133">Transmembrane helix</keyword>
<keyword id="KW-0813">Transport</keyword>
<sequence>MRRPLDPRDIPDELRRRLGLLDAVVIGLGSMIGAGIFAALAPAAYAAGSGLLLGLAVAAVVAYCNAISSARLAARYPASGGTYVYGRMRLGDFWGYLAGWGFVVGKTASCAAMALTVGFYVWPAQAHAVAVAVVVALTAVNYAGIQKSAWLTRSIVAVVLVVLTAVVVAAYGSGAADPARLDIGVDAHVWGMLQAAGLLFFAFAGYARIATLGEEVRDPARTIPRAIPLALGITLAVYALVAVAVIAVLGPQRLARAAAPLSEAMRVAGVNWLIPVVQIGAAVAALGSLLALILGVSRTTLAMARDRHLPRWLAAVHPRFKVPFRAELVVGAVVAALAATADIRGAIGFSSFGVLVYYAIANASALTLGLDEGRPRRLIPLVGLIGCVVLAFALPLSSVAAGAAVLGVGVAAYGVRRIITRRARQTDSGDTQRSGHPSAT</sequence>
<protein>
    <recommendedName>
        <fullName>Uncharacterized transporter Mb2022c</fullName>
    </recommendedName>
</protein>